<comment type="function">
    <text evidence="2">May play a role in sequestering potentially toxic fatty acids and their peroxidation products, or it may be involved in the maintenance of the impermeable lipid layer of the eggshell.</text>
</comment>
<comment type="subcellular location">
    <subcellularLocation>
        <location evidence="2">Secreted</location>
    </subcellularLocation>
    <text>From muscle into the perienteric fluid.</text>
</comment>
<comment type="domain">
    <text evidence="1">Forms a beta-barrel structure that accommodates hydrophobic ligands in its interior.</text>
</comment>
<comment type="similarity">
    <text evidence="4">Belongs to the calycin superfamily. Fatty-acid binding protein (FABP) family.</text>
</comment>
<organism>
    <name type="scientific">Caenorhabditis elegans</name>
    <dbReference type="NCBI Taxonomy" id="6239"/>
    <lineage>
        <taxon>Eukaryota</taxon>
        <taxon>Metazoa</taxon>
        <taxon>Ecdysozoa</taxon>
        <taxon>Nematoda</taxon>
        <taxon>Chromadorea</taxon>
        <taxon>Rhabditida</taxon>
        <taxon>Rhabditina</taxon>
        <taxon>Rhabditomorpha</taxon>
        <taxon>Rhabditoidea</taxon>
        <taxon>Rhabditidae</taxon>
        <taxon>Peloderinae</taxon>
        <taxon>Caenorhabditis</taxon>
    </lineage>
</organism>
<accession>Q20224</accession>
<reference key="1">
    <citation type="journal article" date="1998" name="Science">
        <title>Genome sequence of the nematode C. elegans: a platform for investigating biology.</title>
        <authorList>
            <consortium name="The C. elegans sequencing consortium"/>
        </authorList>
    </citation>
    <scope>NUCLEOTIDE SEQUENCE [LARGE SCALE GENOMIC DNA]</scope>
    <source>
        <strain>Bristol N2</strain>
    </source>
</reference>
<reference key="2">
    <citation type="journal article" date="1997" name="Electrophoresis">
        <title>Two-dimensional gel electrophoresis of Caenorhabditis elegans homogenates and identification of protein spots by microsequencing.</title>
        <authorList>
            <person name="Bini L."/>
            <person name="Heid H."/>
            <person name="Liberatori S."/>
            <person name="Geier G."/>
            <person name="Pallini V."/>
            <person name="Zwilling R."/>
        </authorList>
    </citation>
    <scope>PROTEIN SEQUENCE OF 20-37</scope>
    <source>
        <strain>Bristol N2</strain>
    </source>
</reference>
<reference key="3">
    <citation type="journal article" date="2000" name="Mol. Biochem. Parasitol.">
        <title>Secretion of a novel class of iFABPs in nematodes: coordinate use of the Ascaris/Caenorhabditis model systems.</title>
        <authorList>
            <person name="Plenefisch J."/>
            <person name="Xiao H."/>
            <person name="Mei B."/>
            <person name="Geng J."/>
            <person name="Komuniecki P.R."/>
            <person name="Komuniecki R."/>
        </authorList>
    </citation>
    <scope>FUNCTION</scope>
    <scope>SUBCELLULAR LOCATION</scope>
</reference>
<sequence length="161" mass="18843">MSSKFLILLAFCGATLVAAEQLPEKFYGTFDLDHSENFDEYLTAKGYGWFTRKLVTFATFKKVFAKNANKNLFDYSNLTSKKDVFYKNVQIGSKFEGEGLDNTKHEVTFTLKDGHLFEHHKPLEEGESKEETYEYYFDGDFLIQKMSFNNIEGRRFYKRLP</sequence>
<gene>
    <name type="primary">lbp-2</name>
    <name type="ORF">F40F4.2</name>
</gene>
<feature type="signal peptide" evidence="3">
    <location>
        <begin position="1"/>
        <end position="19"/>
    </location>
</feature>
<feature type="chain" id="PRO_0000008738" description="Fatty acid-binding protein homolog 2">
    <location>
        <begin position="20"/>
        <end position="161"/>
    </location>
</feature>
<dbReference type="EMBL" id="FO081243">
    <property type="protein sequence ID" value="CCD70141.1"/>
    <property type="molecule type" value="Genomic_DNA"/>
</dbReference>
<dbReference type="PIR" id="T16310">
    <property type="entry name" value="T16310"/>
</dbReference>
<dbReference type="RefSeq" id="NP_508558.1">
    <property type="nucleotide sequence ID" value="NM_076157.10"/>
</dbReference>
<dbReference type="SMR" id="Q20224"/>
<dbReference type="BioGRID" id="45558">
    <property type="interactions" value="42"/>
</dbReference>
<dbReference type="FunCoup" id="Q20224">
    <property type="interactions" value="2"/>
</dbReference>
<dbReference type="IntAct" id="Q20224">
    <property type="interactions" value="1"/>
</dbReference>
<dbReference type="STRING" id="6239.F40F4.2.1"/>
<dbReference type="PaxDb" id="6239-F40F4.2.2"/>
<dbReference type="PeptideAtlas" id="Q20224"/>
<dbReference type="EnsemblMetazoa" id="F40F4.2.1">
    <property type="protein sequence ID" value="F40F4.2.1"/>
    <property type="gene ID" value="WBGene00002254"/>
</dbReference>
<dbReference type="EnsemblMetazoa" id="F40F4.2.2">
    <property type="protein sequence ID" value="F40F4.2.2"/>
    <property type="gene ID" value="WBGene00002254"/>
</dbReference>
<dbReference type="GeneID" id="180617"/>
<dbReference type="KEGG" id="cel:CELE_F40F4.2"/>
<dbReference type="UCSC" id="F40F4.2.1">
    <property type="organism name" value="c. elegans"/>
</dbReference>
<dbReference type="AGR" id="WB:WBGene00002254"/>
<dbReference type="CTD" id="180617"/>
<dbReference type="WormBase" id="F40F4.2">
    <property type="protein sequence ID" value="CE04532"/>
    <property type="gene ID" value="WBGene00002254"/>
    <property type="gene designation" value="lbp-2"/>
</dbReference>
<dbReference type="eggNOG" id="KOG4015">
    <property type="taxonomic scope" value="Eukaryota"/>
</dbReference>
<dbReference type="GeneTree" id="ENSGT00390000007345"/>
<dbReference type="HOGENOM" id="CLU_113772_2_1_1"/>
<dbReference type="InParanoid" id="Q20224"/>
<dbReference type="OMA" id="RFHMEED"/>
<dbReference type="OrthoDB" id="412780at2759"/>
<dbReference type="PhylomeDB" id="Q20224"/>
<dbReference type="PRO" id="PR:Q20224"/>
<dbReference type="Proteomes" id="UP000001940">
    <property type="component" value="Chromosome X"/>
</dbReference>
<dbReference type="Bgee" id="WBGene00002254">
    <property type="expression patterns" value="Expressed in adult organism and 4 other cell types or tissues"/>
</dbReference>
<dbReference type="GO" id="GO:0005576">
    <property type="term" value="C:extracellular region"/>
    <property type="evidence" value="ECO:0007669"/>
    <property type="project" value="UniProtKB-SubCell"/>
</dbReference>
<dbReference type="GO" id="GO:0008289">
    <property type="term" value="F:lipid binding"/>
    <property type="evidence" value="ECO:0007669"/>
    <property type="project" value="UniProtKB-KW"/>
</dbReference>
<dbReference type="CDD" id="cd00742">
    <property type="entry name" value="FABP"/>
    <property type="match status" value="1"/>
</dbReference>
<dbReference type="Gene3D" id="2.40.128.20">
    <property type="match status" value="1"/>
</dbReference>
<dbReference type="InterPro" id="IPR012674">
    <property type="entry name" value="Calycin"/>
</dbReference>
<dbReference type="InterPro" id="IPR000463">
    <property type="entry name" value="Fatty_acid-bd"/>
</dbReference>
<dbReference type="InterPro" id="IPR040094">
    <property type="entry name" value="Lbp1-4"/>
</dbReference>
<dbReference type="PANTHER" id="PTHR22725:SF2">
    <property type="entry name" value="FATTY ACID-BINDING PROTEIN HOMOLOG 1-RELATED"/>
    <property type="match status" value="1"/>
</dbReference>
<dbReference type="PANTHER" id="PTHR22725">
    <property type="entry name" value="FATTY ACID-BINDING PROTEIN HOMOLOG 1-RELATED-RELATED"/>
    <property type="match status" value="1"/>
</dbReference>
<dbReference type="PRINTS" id="PR00178">
    <property type="entry name" value="FATTYACIDBP"/>
</dbReference>
<dbReference type="SUPFAM" id="SSF50814">
    <property type="entry name" value="Lipocalins"/>
    <property type="match status" value="1"/>
</dbReference>
<dbReference type="PROSITE" id="PS00214">
    <property type="entry name" value="FABP"/>
    <property type="match status" value="1"/>
</dbReference>
<name>FABP2_CAEEL</name>
<evidence type="ECO:0000250" key="1"/>
<evidence type="ECO:0000269" key="2">
    <source>
    </source>
</evidence>
<evidence type="ECO:0000269" key="3">
    <source>
    </source>
</evidence>
<evidence type="ECO:0000305" key="4"/>
<keyword id="KW-0903">Direct protein sequencing</keyword>
<keyword id="KW-0446">Lipid-binding</keyword>
<keyword id="KW-1185">Reference proteome</keyword>
<keyword id="KW-0964">Secreted</keyword>
<keyword id="KW-0732">Signal</keyword>
<keyword id="KW-0813">Transport</keyword>
<proteinExistence type="evidence at protein level"/>
<protein>
    <recommendedName>
        <fullName>Fatty acid-binding protein homolog 2</fullName>
    </recommendedName>
    <alternativeName>
        <fullName>Lipid-binding protein 2</fullName>
    </alternativeName>
</protein>